<feature type="chain" id="PRO_0000250318" description="Glycerol-3-phosphate acyltransferase">
    <location>
        <begin position="1"/>
        <end position="197"/>
    </location>
</feature>
<feature type="transmembrane region" description="Helical" evidence="1">
    <location>
        <begin position="1"/>
        <end position="21"/>
    </location>
</feature>
<feature type="transmembrane region" description="Helical" evidence="1">
    <location>
        <begin position="50"/>
        <end position="70"/>
    </location>
</feature>
<feature type="transmembrane region" description="Helical" evidence="1">
    <location>
        <begin position="77"/>
        <end position="97"/>
    </location>
</feature>
<feature type="transmembrane region" description="Helical" evidence="1">
    <location>
        <begin position="111"/>
        <end position="131"/>
    </location>
</feature>
<feature type="transmembrane region" description="Helical" evidence="1">
    <location>
        <begin position="136"/>
        <end position="156"/>
    </location>
</feature>
<feature type="transmembrane region" description="Helical" evidence="1">
    <location>
        <begin position="157"/>
        <end position="177"/>
    </location>
</feature>
<comment type="function">
    <text evidence="1">Catalyzes the transfer of an acyl group from acyl-phosphate (acyl-PO(4)) to glycerol-3-phosphate (G3P) to form lysophosphatidic acid (LPA). This enzyme utilizes acyl-phosphate as fatty acyl donor, but not acyl-CoA or acyl-ACP.</text>
</comment>
<comment type="catalytic activity">
    <reaction evidence="1">
        <text>an acyl phosphate + sn-glycerol 3-phosphate = a 1-acyl-sn-glycero-3-phosphate + phosphate</text>
        <dbReference type="Rhea" id="RHEA:34075"/>
        <dbReference type="ChEBI" id="CHEBI:43474"/>
        <dbReference type="ChEBI" id="CHEBI:57597"/>
        <dbReference type="ChEBI" id="CHEBI:57970"/>
        <dbReference type="ChEBI" id="CHEBI:59918"/>
        <dbReference type="EC" id="2.3.1.275"/>
    </reaction>
</comment>
<comment type="pathway">
    <text evidence="1">Lipid metabolism; phospholipid metabolism.</text>
</comment>
<comment type="subunit">
    <text evidence="1">Probably interacts with PlsX.</text>
</comment>
<comment type="subcellular location">
    <subcellularLocation>
        <location evidence="1">Cell inner membrane</location>
        <topology evidence="1">Multi-pass membrane protein</topology>
    </subcellularLocation>
</comment>
<comment type="similarity">
    <text evidence="1">Belongs to the PlsY family.</text>
</comment>
<protein>
    <recommendedName>
        <fullName evidence="1">Glycerol-3-phosphate acyltransferase</fullName>
    </recommendedName>
    <alternativeName>
        <fullName evidence="1">Acyl-PO4 G3P acyltransferase</fullName>
    </alternativeName>
    <alternativeName>
        <fullName evidence="1">Acyl-phosphate--glycerol-3-phosphate acyltransferase</fullName>
    </alternativeName>
    <alternativeName>
        <fullName evidence="1">G3P acyltransferase</fullName>
        <shortName evidence="1">GPAT</shortName>
        <ecNumber evidence="1">2.3.1.275</ecNumber>
    </alternativeName>
    <alternativeName>
        <fullName evidence="1">Lysophosphatidic acid synthase</fullName>
        <shortName evidence="1">LPA synthase</shortName>
    </alternativeName>
</protein>
<name>PLSY_PROM9</name>
<organism>
    <name type="scientific">Prochlorococcus marinus (strain MIT 9312)</name>
    <dbReference type="NCBI Taxonomy" id="74546"/>
    <lineage>
        <taxon>Bacteria</taxon>
        <taxon>Bacillati</taxon>
        <taxon>Cyanobacteriota</taxon>
        <taxon>Cyanophyceae</taxon>
        <taxon>Synechococcales</taxon>
        <taxon>Prochlorococcaceae</taxon>
        <taxon>Prochlorococcus</taxon>
    </lineage>
</organism>
<evidence type="ECO:0000255" key="1">
    <source>
        <dbReference type="HAMAP-Rule" id="MF_01043"/>
    </source>
</evidence>
<sequence length="197" mass="21631">MNILIIFVSYLLGSLPTGFLIGKYLKNIDLRNIGSGSTGATNVLRNVGKWPALIVFIIDVGKGLIAVKIAQHYTDQGLIEVIAGISAITGHIWPIWLRGKGGKAVATGLGMFLALSWKVGLASLGIFLIVLAKTKFVSLSSISAAIFLPFFMFFYLGNYMHSYFFISLIVALLVIWKHRTNITRLLKGEESKINQNQ</sequence>
<keyword id="KW-0997">Cell inner membrane</keyword>
<keyword id="KW-1003">Cell membrane</keyword>
<keyword id="KW-0444">Lipid biosynthesis</keyword>
<keyword id="KW-0443">Lipid metabolism</keyword>
<keyword id="KW-0472">Membrane</keyword>
<keyword id="KW-0594">Phospholipid biosynthesis</keyword>
<keyword id="KW-1208">Phospholipid metabolism</keyword>
<keyword id="KW-0808">Transferase</keyword>
<keyword id="KW-0812">Transmembrane</keyword>
<keyword id="KW-1133">Transmembrane helix</keyword>
<proteinExistence type="inferred from homology"/>
<dbReference type="EC" id="2.3.1.275" evidence="1"/>
<dbReference type="EMBL" id="CP000111">
    <property type="protein sequence ID" value="ABB50485.1"/>
    <property type="molecule type" value="Genomic_DNA"/>
</dbReference>
<dbReference type="RefSeq" id="WP_011376969.1">
    <property type="nucleotide sequence ID" value="NC_007577.1"/>
</dbReference>
<dbReference type="SMR" id="Q319G0"/>
<dbReference type="STRING" id="74546.PMT9312_1425"/>
<dbReference type="KEGG" id="pmi:PMT9312_1425"/>
<dbReference type="eggNOG" id="COG0344">
    <property type="taxonomic scope" value="Bacteria"/>
</dbReference>
<dbReference type="HOGENOM" id="CLU_081254_7_1_3"/>
<dbReference type="OrthoDB" id="9777124at2"/>
<dbReference type="UniPathway" id="UPA00085"/>
<dbReference type="Proteomes" id="UP000002715">
    <property type="component" value="Chromosome"/>
</dbReference>
<dbReference type="GO" id="GO:0005886">
    <property type="term" value="C:plasma membrane"/>
    <property type="evidence" value="ECO:0007669"/>
    <property type="project" value="UniProtKB-SubCell"/>
</dbReference>
<dbReference type="GO" id="GO:0043772">
    <property type="term" value="F:acyl-phosphate glycerol-3-phosphate acyltransferase activity"/>
    <property type="evidence" value="ECO:0007669"/>
    <property type="project" value="UniProtKB-UniRule"/>
</dbReference>
<dbReference type="GO" id="GO:0008654">
    <property type="term" value="P:phospholipid biosynthetic process"/>
    <property type="evidence" value="ECO:0007669"/>
    <property type="project" value="UniProtKB-UniRule"/>
</dbReference>
<dbReference type="HAMAP" id="MF_01043">
    <property type="entry name" value="PlsY"/>
    <property type="match status" value="1"/>
</dbReference>
<dbReference type="InterPro" id="IPR003811">
    <property type="entry name" value="G3P_acylTferase_PlsY"/>
</dbReference>
<dbReference type="NCBIfam" id="TIGR00023">
    <property type="entry name" value="glycerol-3-phosphate 1-O-acyltransferase PlsY"/>
    <property type="match status" value="1"/>
</dbReference>
<dbReference type="PANTHER" id="PTHR30309:SF0">
    <property type="entry name" value="GLYCEROL-3-PHOSPHATE ACYLTRANSFERASE-RELATED"/>
    <property type="match status" value="1"/>
</dbReference>
<dbReference type="PANTHER" id="PTHR30309">
    <property type="entry name" value="INNER MEMBRANE PROTEIN YGIH"/>
    <property type="match status" value="1"/>
</dbReference>
<dbReference type="Pfam" id="PF02660">
    <property type="entry name" value="G3P_acyltransf"/>
    <property type="match status" value="1"/>
</dbReference>
<dbReference type="SMART" id="SM01207">
    <property type="entry name" value="G3P_acyltransf"/>
    <property type="match status" value="1"/>
</dbReference>
<gene>
    <name evidence="1" type="primary">plsY</name>
    <name type="ordered locus">PMT9312_1425</name>
</gene>
<reference key="1">
    <citation type="journal article" date="2006" name="Science">
        <title>Genomic islands and the ecology and evolution of Prochlorococcus.</title>
        <authorList>
            <person name="Coleman M.L."/>
            <person name="Sullivan M.B."/>
            <person name="Martiny A.C."/>
            <person name="Steglich C."/>
            <person name="Barry K."/>
            <person name="Delong E.F."/>
            <person name="Chisholm S.W."/>
        </authorList>
    </citation>
    <scope>NUCLEOTIDE SEQUENCE [LARGE SCALE GENOMIC DNA]</scope>
    <source>
        <strain>MIT 9312</strain>
    </source>
</reference>
<accession>Q319G0</accession>